<dbReference type="EMBL" id="CP000555">
    <property type="protein sequence ID" value="ABM96106.1"/>
    <property type="molecule type" value="Genomic_DNA"/>
</dbReference>
<dbReference type="RefSeq" id="WP_011830729.1">
    <property type="nucleotide sequence ID" value="NC_008825.1"/>
</dbReference>
<dbReference type="SMR" id="A2SKL7"/>
<dbReference type="STRING" id="420662.Mpe_A3153"/>
<dbReference type="KEGG" id="mpt:Mpe_A3153"/>
<dbReference type="eggNOG" id="COG0316">
    <property type="taxonomic scope" value="Bacteria"/>
</dbReference>
<dbReference type="HOGENOM" id="CLU_069054_5_3_4"/>
<dbReference type="Proteomes" id="UP000000366">
    <property type="component" value="Chromosome"/>
</dbReference>
<dbReference type="GO" id="GO:0051537">
    <property type="term" value="F:2 iron, 2 sulfur cluster binding"/>
    <property type="evidence" value="ECO:0007669"/>
    <property type="project" value="UniProtKB-ARBA"/>
</dbReference>
<dbReference type="GO" id="GO:0051539">
    <property type="term" value="F:4 iron, 4 sulfur cluster binding"/>
    <property type="evidence" value="ECO:0007669"/>
    <property type="project" value="TreeGrafter"/>
</dbReference>
<dbReference type="GO" id="GO:0005506">
    <property type="term" value="F:iron ion binding"/>
    <property type="evidence" value="ECO:0007669"/>
    <property type="project" value="UniProtKB-UniRule"/>
</dbReference>
<dbReference type="GO" id="GO:0016226">
    <property type="term" value="P:iron-sulfur cluster assembly"/>
    <property type="evidence" value="ECO:0007669"/>
    <property type="project" value="UniProtKB-UniRule"/>
</dbReference>
<dbReference type="FunFam" id="2.60.300.12:FF:000002">
    <property type="entry name" value="Iron-sulfur cluster insertion protein ErpA"/>
    <property type="match status" value="1"/>
</dbReference>
<dbReference type="Gene3D" id="2.60.300.12">
    <property type="entry name" value="HesB-like domain"/>
    <property type="match status" value="1"/>
</dbReference>
<dbReference type="HAMAP" id="MF_01380">
    <property type="entry name" value="Fe_S_insert_ErpA"/>
    <property type="match status" value="1"/>
</dbReference>
<dbReference type="InterPro" id="IPR000361">
    <property type="entry name" value="FeS_biogenesis"/>
</dbReference>
<dbReference type="InterPro" id="IPR016092">
    <property type="entry name" value="FeS_cluster_insertion"/>
</dbReference>
<dbReference type="InterPro" id="IPR017870">
    <property type="entry name" value="FeS_cluster_insertion_CS"/>
</dbReference>
<dbReference type="InterPro" id="IPR023063">
    <property type="entry name" value="FeS_cluster_insertion_RrpA"/>
</dbReference>
<dbReference type="InterPro" id="IPR035903">
    <property type="entry name" value="HesB-like_dom_sf"/>
</dbReference>
<dbReference type="NCBIfam" id="TIGR00049">
    <property type="entry name" value="iron-sulfur cluster assembly accessory protein"/>
    <property type="match status" value="1"/>
</dbReference>
<dbReference type="NCBIfam" id="NF010147">
    <property type="entry name" value="PRK13623.1"/>
    <property type="match status" value="1"/>
</dbReference>
<dbReference type="PANTHER" id="PTHR43011">
    <property type="entry name" value="IRON-SULFUR CLUSTER ASSEMBLY 2 HOMOLOG, MITOCHONDRIAL"/>
    <property type="match status" value="1"/>
</dbReference>
<dbReference type="PANTHER" id="PTHR43011:SF1">
    <property type="entry name" value="IRON-SULFUR CLUSTER ASSEMBLY 2 HOMOLOG, MITOCHONDRIAL"/>
    <property type="match status" value="1"/>
</dbReference>
<dbReference type="Pfam" id="PF01521">
    <property type="entry name" value="Fe-S_biosyn"/>
    <property type="match status" value="1"/>
</dbReference>
<dbReference type="SUPFAM" id="SSF89360">
    <property type="entry name" value="HesB-like domain"/>
    <property type="match status" value="1"/>
</dbReference>
<dbReference type="PROSITE" id="PS01152">
    <property type="entry name" value="HESB"/>
    <property type="match status" value="1"/>
</dbReference>
<name>ERPA_METPP</name>
<organism>
    <name type="scientific">Methylibium petroleiphilum (strain ATCC BAA-1232 / LMG 22953 / PM1)</name>
    <dbReference type="NCBI Taxonomy" id="420662"/>
    <lineage>
        <taxon>Bacteria</taxon>
        <taxon>Pseudomonadati</taxon>
        <taxon>Pseudomonadota</taxon>
        <taxon>Betaproteobacteria</taxon>
        <taxon>Burkholderiales</taxon>
        <taxon>Sphaerotilaceae</taxon>
        <taxon>Methylibium</taxon>
    </lineage>
</organism>
<accession>A2SKL7</accession>
<proteinExistence type="inferred from homology"/>
<feature type="chain" id="PRO_0000311503" description="Putative iron-sulfur cluster insertion protein ErpA">
    <location>
        <begin position="1"/>
        <end position="121"/>
    </location>
</feature>
<feature type="binding site" evidence="1">
    <location>
        <position position="49"/>
    </location>
    <ligand>
        <name>iron-sulfur cluster</name>
        <dbReference type="ChEBI" id="CHEBI:30408"/>
    </ligand>
</feature>
<feature type="binding site" evidence="1">
    <location>
        <position position="113"/>
    </location>
    <ligand>
        <name>iron-sulfur cluster</name>
        <dbReference type="ChEBI" id="CHEBI:30408"/>
    </ligand>
</feature>
<feature type="binding site" evidence="1">
    <location>
        <position position="115"/>
    </location>
    <ligand>
        <name>iron-sulfur cluster</name>
        <dbReference type="ChEBI" id="CHEBI:30408"/>
    </ligand>
</feature>
<gene>
    <name evidence="1" type="primary">erpA</name>
    <name type="ordered locus">Mpe_A3153</name>
</gene>
<protein>
    <recommendedName>
        <fullName evidence="1">Putative iron-sulfur cluster insertion protein ErpA</fullName>
    </recommendedName>
</protein>
<reference key="1">
    <citation type="journal article" date="2007" name="J. Bacteriol.">
        <title>Whole-genome analysis of the methyl tert-butyl ether-degrading beta-proteobacterium Methylibium petroleiphilum PM1.</title>
        <authorList>
            <person name="Kane S.R."/>
            <person name="Chakicherla A.Y."/>
            <person name="Chain P.S.G."/>
            <person name="Schmidt R."/>
            <person name="Shin M.W."/>
            <person name="Legler T.C."/>
            <person name="Scow K.M."/>
            <person name="Larimer F.W."/>
            <person name="Lucas S.M."/>
            <person name="Richardson P.M."/>
            <person name="Hristova K.R."/>
        </authorList>
    </citation>
    <scope>NUCLEOTIDE SEQUENCE [LARGE SCALE GENOMIC DNA]</scope>
    <source>
        <strain>ATCC BAA-1232 / LMG 22953 / PM1</strain>
    </source>
</reference>
<evidence type="ECO:0000255" key="1">
    <source>
        <dbReference type="HAMAP-Rule" id="MF_01380"/>
    </source>
</evidence>
<sequence>MSAVAEHIATQMPAPIVFTDSAAGKVKELVEEEGNPELKLRVFVQGGGCSGFQYGFTFDEIVNDDDTKMEKNGVMLLIDAMSLQYLVGAEIDYKEDLEGAQFVIKNPNATTTCGCGSSFST</sequence>
<keyword id="KW-0408">Iron</keyword>
<keyword id="KW-0411">Iron-sulfur</keyword>
<keyword id="KW-0479">Metal-binding</keyword>
<keyword id="KW-1185">Reference proteome</keyword>
<comment type="function">
    <text evidence="1">Required for insertion of 4Fe-4S clusters.</text>
</comment>
<comment type="cofactor">
    <cofactor evidence="1">
        <name>iron-sulfur cluster</name>
        <dbReference type="ChEBI" id="CHEBI:30408"/>
    </cofactor>
    <text evidence="1">Binds 1 iron-sulfur cluster per subunit.</text>
</comment>
<comment type="subunit">
    <text evidence="1">Homodimer.</text>
</comment>
<comment type="similarity">
    <text evidence="1">Belongs to the HesB/IscA family.</text>
</comment>